<keyword id="KW-0002">3D-structure</keyword>
<keyword id="KW-0007">Acetylation</keyword>
<keyword id="KW-0025">Alternative splicing</keyword>
<keyword id="KW-0164">Citrullination</keyword>
<keyword id="KW-0963">Cytoplasm</keyword>
<keyword id="KW-0903">Direct protein sequencing</keyword>
<keyword id="KW-0238">DNA-binding</keyword>
<keyword id="KW-1017">Isopeptide bond</keyword>
<keyword id="KW-0488">Methylation</keyword>
<keyword id="KW-0539">Nucleus</keyword>
<keyword id="KW-0597">Phosphoprotein</keyword>
<keyword id="KW-1267">Proteomics identification</keyword>
<keyword id="KW-1185">Reference proteome</keyword>
<keyword id="KW-0678">Repressor</keyword>
<keyword id="KW-0804">Transcription</keyword>
<keyword id="KW-0805">Transcription regulation</keyword>
<keyword id="KW-0832">Ubl conjugation</keyword>
<evidence type="ECO:0000250" key="1"/>
<evidence type="ECO:0000250" key="2">
    <source>
        <dbReference type="UniProtKB" id="Q8K019"/>
    </source>
</evidence>
<evidence type="ECO:0000256" key="3">
    <source>
        <dbReference type="SAM" id="MobiDB-lite"/>
    </source>
</evidence>
<evidence type="ECO:0000269" key="4">
    <source>
    </source>
</evidence>
<evidence type="ECO:0000269" key="5">
    <source>
    </source>
</evidence>
<evidence type="ECO:0000269" key="6">
    <source>
    </source>
</evidence>
<evidence type="ECO:0000269" key="7">
    <source ref="6"/>
</evidence>
<evidence type="ECO:0000303" key="8">
    <source>
    </source>
</evidence>
<evidence type="ECO:0000303" key="9">
    <source>
    </source>
</evidence>
<evidence type="ECO:0000305" key="10"/>
<evidence type="ECO:0007744" key="11">
    <source>
    </source>
</evidence>
<evidence type="ECO:0007744" key="12">
    <source>
    </source>
</evidence>
<evidence type="ECO:0007744" key="13">
    <source>
    </source>
</evidence>
<evidence type="ECO:0007744" key="14">
    <source>
    </source>
</evidence>
<evidence type="ECO:0007744" key="15">
    <source>
    </source>
</evidence>
<evidence type="ECO:0007744" key="16">
    <source>
    </source>
</evidence>
<evidence type="ECO:0007744" key="17">
    <source>
    </source>
</evidence>
<evidence type="ECO:0007744" key="18">
    <source>
    </source>
</evidence>
<evidence type="ECO:0007744" key="19">
    <source>
    </source>
</evidence>
<evidence type="ECO:0007744" key="20">
    <source>
    </source>
</evidence>
<evidence type="ECO:0007744" key="21">
    <source>
    </source>
</evidence>
<evidence type="ECO:0007744" key="22">
    <source>
    </source>
</evidence>
<evidence type="ECO:0007744" key="23">
    <source>
    </source>
</evidence>
<evidence type="ECO:0007744" key="24">
    <source>
    </source>
</evidence>
<evidence type="ECO:0007744" key="25">
    <source>
    </source>
</evidence>
<evidence type="ECO:0007744" key="26">
    <source>
    </source>
</evidence>
<evidence type="ECO:0007744" key="27">
    <source>
    </source>
</evidence>
<organism>
    <name type="scientific">Homo sapiens</name>
    <name type="common">Human</name>
    <dbReference type="NCBI Taxonomy" id="9606"/>
    <lineage>
        <taxon>Eukaryota</taxon>
        <taxon>Metazoa</taxon>
        <taxon>Chordata</taxon>
        <taxon>Craniata</taxon>
        <taxon>Vertebrata</taxon>
        <taxon>Euteleostomi</taxon>
        <taxon>Mammalia</taxon>
        <taxon>Eutheria</taxon>
        <taxon>Euarchontoglires</taxon>
        <taxon>Primates</taxon>
        <taxon>Haplorrhini</taxon>
        <taxon>Catarrhini</taxon>
        <taxon>Hominidae</taxon>
        <taxon>Homo</taxon>
    </lineage>
</organism>
<sequence>MGRSNSRSHSSRSKSRSQSSSRSRSRSHSRKKRYSSRSRSRTYSRSRSRDRMYSRDYRRDYRNNRGMRRPYGYRGRGRGYYQGGGGRYHRGGYRPVWNRRHSRSPRRGRSRSRSPKRRSVSSQRSRSRSRRSYRSSRSPRSSSSRSSSPYSKSPVSKRRGSQEKQTKKAEGEPQEESPLKSKSQEEPKDTFEHDPSESIDEFNKSSATSGDIWPGLSAYDNSPRSPHSPSPIATPPSQSSSCSDAPMLSTVHSAKNTPSQHSHSIQHSPERSGSGSVGNGSSRYSPSQNSPIHHIPSRRSPAKTIAPQNAPRDESRGRSSFYPDGGDQETAKTGKFLKRFTDEESRVFLLDRGNTRDKEASKEKGSEKGRAEGEWEDQEALDYFSDKESGKQKFNDSEGDDTEETEDYRQFRKSVLADQGKSFATASHRNTEEEGLKYKSKVSLKGNRESDGFREEKNYKLKETGYVVERPSTTKDKHKEEDKNSERITVKKETQSPEQVKSEKLKDLFDYSPPLHKNLDAREKSTFREESPLRIKMIASDSHRPEVKLKMAPVPLDDSNRPASLTKDRLLASTLVHSVKKEQEFRSIFDHIKLPQASKSTSESFIQHIVSLVHHVKEQYFKSAAMTLNERFTSYQKATEEHSTRQKSPEIHRRIDISPSTLRKHTRLAGEERVFKEENQKGDKKLRCDSADLRHDIDRRRKERSKERGDSKGSRESSGSRKQEKTPKDYKEYKSYKDDSKHKREQDHSRSSSSSASPSSPSSREEKESKKEREEEFKTHHEMKEYSGFAGVSRPRGTFFRIRGRGRARGVFAGTNTGPNNSNTTFQKRPKEEEWDPEYTPKSKKYFLHDDRDDGVDYWAKRGRGRGTFQRGRGRFNFKKSGSSPKWTHDKYQGDGIVEDEEETMENNEEKKDRRKEEKE</sequence>
<comment type="function">
    <text evidence="5">Death-promoting transcriptional repressor. May be involved in cyclin-D1/CCND1 mRNA stability through the SNARP complex which associates with both the 3'end of the CCND1 gene and its mRNA.</text>
</comment>
<comment type="subunit">
    <text evidence="4 5 6">Interacts with Bcl-2 related proteins, EMD, with the adenovirus E1B 19 kDa protein and with DNA. Component of the SNARP complex which consists at least of SNIP1, SNW1, THRAP3, BCLAF1 and PNN. Component of a MACOM-like complex, named WTAP complex, composed of WTAP, ZC3H13, CBLL1, KIAA1429, RBM15, BCLAF1 and THRAP3.</text>
</comment>
<comment type="interaction">
    <interactant intactId="EBI-437804">
        <id>Q9NYF8</id>
    </interactant>
    <interactant intactId="EBI-77694">
        <id>P10415</id>
        <label>BCL2</label>
    </interactant>
    <organismsDiffer>false</organismsDiffer>
    <experiments>2</experiments>
</comment>
<comment type="interaction">
    <interactant intactId="EBI-437804">
        <id>Q9NYF8</id>
    </interactant>
    <interactant intactId="EBI-2835660">
        <id>Q92828</id>
        <label>CORO2A</label>
    </interactant>
    <organismsDiffer>false</organismsDiffer>
    <experiments>3</experiments>
</comment>
<comment type="interaction">
    <interactant intactId="EBI-437804">
        <id>Q9NYF8</id>
    </interactant>
    <interactant intactId="EBI-489887">
        <id>P50402</id>
        <label>EMD</label>
    </interactant>
    <organismsDiffer>false</organismsDiffer>
    <experiments>3</experiments>
</comment>
<comment type="subcellular location">
    <subcellularLocation>
        <location>Cytoplasm</location>
    </subcellularLocation>
    <subcellularLocation>
        <location>Nucleus</location>
    </subcellularLocation>
    <subcellularLocation>
        <location evidence="6">Nucleus speckle</location>
    </subcellularLocation>
    <subcellularLocation>
        <location evidence="6">Nucleus</location>
        <location evidence="6">Nucleoplasm</location>
    </subcellularLocation>
</comment>
<comment type="alternative products">
    <event type="alternative splicing"/>
    <isoform>
        <id>Q9NYF8-1</id>
        <name>1</name>
        <sequence type="displayed"/>
    </isoform>
    <isoform>
        <id>Q9NYF8-2</id>
        <name>2</name>
        <name>Btf-l</name>
        <sequence type="described" ref="VSP_010369"/>
    </isoform>
    <isoform>
        <id>Q9NYF8-3</id>
        <name>3</name>
        <name>Btf-s</name>
        <name>BP-1</name>
        <sequence type="described" ref="VSP_010369 VSP_010370"/>
    </isoform>
    <isoform>
        <id>Q9NYF8-4</id>
        <name>4</name>
        <sequence type="described" ref="VSP_010371"/>
    </isoform>
</comment>
<comment type="tissue specificity">
    <text>Ubiquitous.</text>
</comment>
<comment type="PTM">
    <text evidence="1">Citrullinated by PADI4.</text>
</comment>
<comment type="similarity">
    <text evidence="10">Belongs to the BCLAF1/THRAP3 family.</text>
</comment>
<comment type="sequence caution" evidence="10">
    <conflict type="miscellaneous discrepancy">
        <sequence resource="EMBL-CDS" id="AAH47687"/>
    </conflict>
    <text>Contaminating sequence. Potential poly-A sequence.</text>
</comment>
<comment type="sequence caution" evidence="10">
    <conflict type="miscellaneous discrepancy">
        <sequence resource="EMBL-CDS" id="AAH47887"/>
    </conflict>
    <text>Contaminating sequence. Potential poly-A sequence.</text>
</comment>
<comment type="sequence caution" evidence="10">
    <conflict type="miscellaneous discrepancy">
        <sequence resource="EMBL-CDS" id="AAH56894"/>
    </conflict>
    <text>Contaminating sequence. Potential poly-A sequence.</text>
</comment>
<comment type="sequence caution" evidence="10">
    <conflict type="miscellaneous discrepancy">
        <sequence resource="EMBL-CDS" id="AAH63846"/>
    </conflict>
    <text>Contaminating sequence. Potential poly-A sequence.</text>
</comment>
<comment type="sequence caution" evidence="10">
    <conflict type="erroneous initiation">
        <sequence resource="EMBL-CDS" id="BAA11481"/>
    </conflict>
</comment>
<comment type="online information" name="Atlas of Genetics and Cytogenetics in Oncology and Haematology">
    <link uri="https://atlasgeneticsoncology.org/gene/43164/BCLAF1"/>
</comment>
<proteinExistence type="evidence at protein level"/>
<feature type="chain" id="PRO_0000064888" description="Bcl-2-associated transcription factor 1">
    <location>
        <begin position="1"/>
        <end position="920"/>
    </location>
</feature>
<feature type="region of interest" description="Disordered" evidence="3">
    <location>
        <begin position="1"/>
        <end position="437"/>
    </location>
</feature>
<feature type="region of interest" description="Disordered" evidence="3">
    <location>
        <begin position="464"/>
        <end position="502"/>
    </location>
</feature>
<feature type="region of interest" description="Disordered" evidence="3">
    <location>
        <begin position="637"/>
        <end position="796"/>
    </location>
</feature>
<feature type="region of interest" description="Disordered" evidence="3">
    <location>
        <begin position="810"/>
        <end position="840"/>
    </location>
</feature>
<feature type="region of interest" description="Disordered" evidence="3">
    <location>
        <begin position="862"/>
        <end position="920"/>
    </location>
</feature>
<feature type="compositionally biased region" description="Basic residues" evidence="3">
    <location>
        <begin position="23"/>
        <end position="46"/>
    </location>
</feature>
<feature type="compositionally biased region" description="Basic and acidic residues" evidence="3">
    <location>
        <begin position="47"/>
        <end position="63"/>
    </location>
</feature>
<feature type="compositionally biased region" description="Basic residues" evidence="3">
    <location>
        <begin position="87"/>
        <end position="134"/>
    </location>
</feature>
<feature type="compositionally biased region" description="Low complexity" evidence="3">
    <location>
        <begin position="135"/>
        <end position="154"/>
    </location>
</feature>
<feature type="compositionally biased region" description="Basic and acidic residues" evidence="3">
    <location>
        <begin position="160"/>
        <end position="196"/>
    </location>
</feature>
<feature type="compositionally biased region" description="Basic and acidic residues" evidence="3">
    <location>
        <begin position="353"/>
        <end position="373"/>
    </location>
</feature>
<feature type="compositionally biased region" description="Basic and acidic residues" evidence="3">
    <location>
        <begin position="384"/>
        <end position="396"/>
    </location>
</feature>
<feature type="compositionally biased region" description="Acidic residues" evidence="3">
    <location>
        <begin position="397"/>
        <end position="406"/>
    </location>
</feature>
<feature type="compositionally biased region" description="Basic and acidic residues" evidence="3">
    <location>
        <begin position="472"/>
        <end position="502"/>
    </location>
</feature>
<feature type="compositionally biased region" description="Basic and acidic residues" evidence="3">
    <location>
        <begin position="638"/>
        <end position="656"/>
    </location>
</feature>
<feature type="compositionally biased region" description="Basic and acidic residues" evidence="3">
    <location>
        <begin position="668"/>
        <end position="750"/>
    </location>
</feature>
<feature type="compositionally biased region" description="Low complexity" evidence="3">
    <location>
        <begin position="751"/>
        <end position="762"/>
    </location>
</feature>
<feature type="compositionally biased region" description="Basic and acidic residues" evidence="3">
    <location>
        <begin position="763"/>
        <end position="785"/>
    </location>
</feature>
<feature type="compositionally biased region" description="Low complexity" evidence="3">
    <location>
        <begin position="810"/>
        <end position="825"/>
    </location>
</feature>
<feature type="compositionally biased region" description="Acidic residues" evidence="3">
    <location>
        <begin position="897"/>
        <end position="907"/>
    </location>
</feature>
<feature type="compositionally biased region" description="Basic and acidic residues" evidence="3">
    <location>
        <begin position="908"/>
        <end position="920"/>
    </location>
</feature>
<feature type="modified residue" description="Phosphoserine" evidence="18">
    <location>
        <position position="102"/>
    </location>
</feature>
<feature type="modified residue" description="Phosphoserine" evidence="18">
    <location>
        <position position="104"/>
    </location>
</feature>
<feature type="modified residue" description="N6-acetyllysine" evidence="16">
    <location>
        <position position="152"/>
    </location>
</feature>
<feature type="modified residue" description="Phosphoserine" evidence="7 11 13 17 18 19 20 22">
    <location>
        <position position="177"/>
    </location>
</feature>
<feature type="modified residue" description="Phosphoserine" evidence="14">
    <location>
        <position position="181"/>
    </location>
</feature>
<feature type="modified residue" description="Phosphoserine" evidence="18 19 20">
    <location>
        <position position="196"/>
    </location>
</feature>
<feature type="modified residue" description="Phosphoserine" evidence="18 19 20">
    <location>
        <position position="198"/>
    </location>
</feature>
<feature type="modified residue" description="Phosphotyrosine" evidence="22">
    <location>
        <position position="219"/>
    </location>
</feature>
<feature type="modified residue" description="Phosphoserine" evidence="14 17 18 19 20 22">
    <location>
        <position position="222"/>
    </location>
</feature>
<feature type="modified residue" description="Phosphoserine" evidence="20 22">
    <location>
        <position position="259"/>
    </location>
</feature>
<feature type="modified residue" description="Phosphoserine" evidence="20">
    <location>
        <position position="262"/>
    </location>
</feature>
<feature type="modified residue" description="Phosphoserine" evidence="14 20 22">
    <location>
        <position position="264"/>
    </location>
</feature>
<feature type="modified residue" description="Phosphoserine" evidence="7 14 18 19 20">
    <location>
        <position position="268"/>
    </location>
</feature>
<feature type="modified residue" description="Phosphotyrosine" evidence="14">
    <location>
        <position position="284"/>
    </location>
</feature>
<feature type="modified residue" description="Phosphoserine" evidence="19 20 22">
    <location>
        <position position="285"/>
    </location>
</feature>
<feature type="modified residue" description="Phosphoserine" evidence="7 14 17 18 19 20 22">
    <location>
        <position position="290"/>
    </location>
</feature>
<feature type="modified residue" description="Phosphoserine" evidence="18">
    <location>
        <position position="297"/>
    </location>
</feature>
<feature type="modified residue" description="Phosphoserine" evidence="20">
    <location>
        <position position="300"/>
    </location>
</feature>
<feature type="modified residue" description="Phosphoserine" evidence="20">
    <location>
        <position position="315"/>
    </location>
</feature>
<feature type="modified residue" description="N6-acetyllysine; alternate" evidence="2">
    <location>
        <position position="332"/>
    </location>
</feature>
<feature type="modified residue" description="Phosphothreonine" evidence="14 20">
    <location>
        <position position="341"/>
    </location>
</feature>
<feature type="modified residue" description="Phosphothreonine" evidence="20">
    <location>
        <position position="355"/>
    </location>
</feature>
<feature type="modified residue" description="Phosphotyrosine" evidence="20">
    <location>
        <position position="383"/>
    </location>
</feature>
<feature type="modified residue" description="Phosphoserine" evidence="14 17 18 19 20 22">
    <location>
        <position position="385"/>
    </location>
</feature>
<feature type="modified residue" description="Phosphoserine" evidence="11 14 22">
    <location>
        <position position="389"/>
    </location>
</feature>
<feature type="modified residue" description="Phosphoserine" evidence="11 12 13 14 15 17 18 19 20 22">
    <location>
        <position position="397"/>
    </location>
</feature>
<feature type="modified residue" description="Phosphothreonine" evidence="11 14 17 18 20">
    <location>
        <position position="402"/>
    </location>
</feature>
<feature type="modified residue" description="N6-acetyllysine; alternate" evidence="2">
    <location>
        <position position="421"/>
    </location>
</feature>
<feature type="modified residue" description="Phosphoserine" evidence="20">
    <location>
        <position position="422"/>
    </location>
</feature>
<feature type="modified residue" description="Phosphoserine" evidence="20">
    <location>
        <position position="427"/>
    </location>
</feature>
<feature type="modified residue" description="Phosphothreonine" evidence="20">
    <location>
        <position position="431"/>
    </location>
</feature>
<feature type="modified residue" description="N6-acetyllysine; alternate" evidence="16">
    <location>
        <position position="437"/>
    </location>
</feature>
<feature type="modified residue" description="Phosphoserine" evidence="20">
    <location>
        <position position="450"/>
    </location>
</feature>
<feature type="modified residue" description="Phosphoserine" evidence="18 20">
    <location>
        <position position="472"/>
    </location>
</feature>
<feature type="modified residue" description="N6-acetyllysine" evidence="2">
    <location>
        <position position="475"/>
    </location>
</feature>
<feature type="modified residue" description="Phosphothreonine" evidence="19">
    <location>
        <position position="494"/>
    </location>
</feature>
<feature type="modified residue" description="Phosphoserine" evidence="18 19 20">
    <location>
        <position position="496"/>
    </location>
</feature>
<feature type="modified residue" description="Phosphoserine" evidence="18">
    <location>
        <position position="502"/>
    </location>
</feature>
<feature type="modified residue" description="Phosphoserine" evidence="7 14 17 18 19 20">
    <location>
        <position position="512"/>
    </location>
</feature>
<feature type="modified residue" description="Phosphoserine" evidence="20">
    <location>
        <position position="525"/>
    </location>
</feature>
<feature type="modified residue" description="Phosphoserine" evidence="7 11 14 18 19 20">
    <location>
        <position position="531"/>
    </location>
</feature>
<feature type="modified residue" description="Phosphoserine" evidence="20">
    <location>
        <position position="559"/>
    </location>
</feature>
<feature type="modified residue" description="Phosphoserine" evidence="20">
    <location>
        <position position="564"/>
    </location>
</feature>
<feature type="modified residue" description="Phosphothreonine" evidence="18">
    <location>
        <position position="566"/>
    </location>
</feature>
<feature type="modified residue" description="Phosphoserine" evidence="14 18 20">
    <location>
        <position position="578"/>
    </location>
</feature>
<feature type="modified residue" description="Phosphoserine" evidence="11 22">
    <location>
        <position position="648"/>
    </location>
</feature>
<feature type="modified residue" description="Phosphoserine" evidence="7 14 18 19 20 22">
    <location>
        <position position="658"/>
    </location>
</feature>
<feature type="modified residue" description="Phosphoserine" evidence="19 20">
    <location>
        <position position="660"/>
    </location>
</feature>
<feature type="modified residue" description="Phosphothreonine" evidence="20">
    <location>
        <position position="661"/>
    </location>
</feature>
<feature type="modified residue" description="Phosphoserine" evidence="18 20">
    <location>
        <position position="690"/>
    </location>
</feature>
<feature type="modified residue" description="Phosphoserine" evidence="19">
    <location>
        <position position="760"/>
    </location>
</feature>
<feature type="modified residue" description="Citrulline" evidence="1">
    <location>
        <position position="803"/>
    </location>
</feature>
<feature type="modified residue" description="Omega-N-methylarginine" evidence="21">
    <location>
        <position position="809"/>
    </location>
</feature>
<feature type="cross-link" description="Glycyl lysine isopeptide (Lys-Gly) (interchain with G-Cter in SUMO2)" evidence="27">
    <location>
        <position position="188"/>
    </location>
</feature>
<feature type="cross-link" description="Glycyl lysine isopeptide (Lys-Gly) (interchain with G-Cter in SUMO2); alternate" evidence="24 27">
    <location>
        <position position="332"/>
    </location>
</feature>
<feature type="cross-link" description="Glycyl lysine isopeptide (Lys-Gly) (interchain with G-Cter in SUMO2)" evidence="24 27">
    <location>
        <position position="413"/>
    </location>
</feature>
<feature type="cross-link" description="Glycyl lysine isopeptide (Lys-Gly) (interchain with G-Cter in SUMO2); alternate" evidence="25 27">
    <location>
        <position position="421"/>
    </location>
</feature>
<feature type="cross-link" description="Glycyl lysine isopeptide (Lys-Gly) (interchain with G-Cter in SUMO2); alternate" evidence="24 25 27">
    <location>
        <position position="437"/>
    </location>
</feature>
<feature type="cross-link" description="Glycyl lysine isopeptide (Lys-Gly) (interchain with G-Cter in SUMO2)" evidence="25 27">
    <location>
        <position position="457"/>
    </location>
</feature>
<feature type="cross-link" description="Glycyl lysine isopeptide (Lys-Gly) (interchain with G-Cter in SUMO2)" evidence="24 27">
    <location>
        <position position="462"/>
    </location>
</feature>
<feature type="cross-link" description="Glycyl lysine isopeptide (Lys-Gly) (interchain with G-Cter in SUMO2)" evidence="24 26 27">
    <location>
        <position position="491"/>
    </location>
</feature>
<feature type="cross-link" description="Glycyl lysine isopeptide (Lys-Gly) (interchain with G-Cter in SUMO2)" evidence="27">
    <location>
        <position position="492"/>
    </location>
</feature>
<feature type="cross-link" description="Glycyl lysine isopeptide (Lys-Gly) (interchain with G-Cter in SUMO2)" evidence="24 25 27">
    <location>
        <position position="501"/>
    </location>
</feature>
<feature type="cross-link" description="Glycyl lysine isopeptide (Lys-Gly) (interchain with G-Cter in SUMO2)" evidence="25 27">
    <location>
        <position position="536"/>
    </location>
</feature>
<feature type="cross-link" description="Glycyl lysine isopeptide (Lys-Gly) (interchain with G-Cter in SUMO2)" evidence="24 25 27">
    <location>
        <position position="548"/>
    </location>
</feature>
<feature type="cross-link" description="Glycyl lysine isopeptide (Lys-Gly) (interchain with G-Cter in SUMO2)" evidence="24 25 27">
    <location>
        <position position="550"/>
    </location>
</feature>
<feature type="cross-link" description="Glycyl lysine isopeptide (Lys-Gly) (interchain with G-Cter in SUMO2)" evidence="27">
    <location>
        <position position="567"/>
    </location>
</feature>
<feature type="cross-link" description="Glycyl lysine isopeptide (Lys-Gly) (interchain with G-Cter in SUMO1); alternate" evidence="23">
    <location>
        <position position="580"/>
    </location>
</feature>
<feature type="cross-link" description="Glycyl lysine isopeptide (Lys-Gly) (interchain with G-Cter in SUMO2); alternate" evidence="23 24 25 26 27">
    <location>
        <position position="580"/>
    </location>
</feature>
<feature type="cross-link" description="Glycyl lysine isopeptide (Lys-Gly) (interchain with G-Cter in SUMO2)" evidence="27">
    <location>
        <position position="593"/>
    </location>
</feature>
<feature type="cross-link" description="Glycyl lysine isopeptide (Lys-Gly) (interchain with G-Cter in SUMO2)" evidence="27">
    <location>
        <position position="599"/>
    </location>
</feature>
<feature type="cross-link" description="Glycyl lysine isopeptide (Lys-Gly) (interchain with G-Cter in SUMO2)" evidence="27">
    <location>
        <position position="622"/>
    </location>
</feature>
<feature type="cross-link" description="Glycyl lysine isopeptide (Lys-Gly) (interchain with G-Cter in SUMO2)" evidence="24 25 26 27">
    <location>
        <position position="676"/>
    </location>
</feature>
<feature type="cross-link" description="Glycyl lysine isopeptide (Lys-Gly) (interchain with G-Cter in SUMO2)" evidence="24 27">
    <location>
        <position position="778"/>
    </location>
</feature>
<feature type="cross-link" description="Glycyl lysine isopeptide (Lys-Gly) (interchain with G-Cter in SUMO2)" evidence="27">
    <location>
        <position position="784"/>
    </location>
</feature>
<feature type="cross-link" description="Glycyl lysine isopeptide (Lys-Gly) (interchain with G-Cter in SUMO1); alternate" evidence="23">
    <location>
        <position position="831"/>
    </location>
</feature>
<feature type="cross-link" description="Glycyl lysine isopeptide (Lys-Gly) (interchain with G-Cter in SUMO2); alternate" evidence="23 24 26 27">
    <location>
        <position position="831"/>
    </location>
</feature>
<feature type="cross-link" description="Glycyl lysine isopeptide (Lys-Gly) (interchain with G-Cter in SUMO2)" evidence="27">
    <location>
        <position position="911"/>
    </location>
</feature>
<feature type="splice variant" id="VSP_010369" description="In isoform 2 and isoform 3." evidence="8 9">
    <location>
        <begin position="35"/>
        <end position="36"/>
    </location>
</feature>
<feature type="splice variant" id="VSP_010371" description="In isoform 4." evidence="9">
    <location>
        <begin position="339"/>
        <end position="511"/>
    </location>
</feature>
<feature type="splice variant" id="VSP_010370" description="In isoform 3." evidence="8">
    <location>
        <begin position="800"/>
        <end position="848"/>
    </location>
</feature>
<feature type="sequence variant" id="VAR_059591" description="In dbSNP:rs9942517.">
    <original>G</original>
    <variation>A</variation>
    <location>
        <position position="66"/>
    </location>
</feature>
<feature type="sequence variant" id="VAR_050692" description="In dbSNP:rs6940018.">
    <original>S</original>
    <variation>C</variation>
    <location>
        <position position="209"/>
    </location>
</feature>
<feature type="sequence variant" id="VAR_050693" description="In dbSNP:rs1967446.">
    <original>Y</original>
    <variation>D</variation>
    <location>
        <position position="459"/>
    </location>
</feature>
<feature type="sequence variant" id="VAR_050694" description="In dbSNP:rs1967445.">
    <original>L</original>
    <variation>H</variation>
    <location>
        <position position="461"/>
    </location>
</feature>
<feature type="sequence variant" id="VAR_050695" description="In dbSNP:rs7381749.">
    <original>N</original>
    <variation>S</variation>
    <location>
        <position position="629"/>
    </location>
</feature>
<feature type="sequence variant" id="VAR_050696" description="In dbSNP:rs34541670.">
    <original>R</original>
    <variation>C</variation>
    <location>
        <position position="875"/>
    </location>
</feature>
<feature type="sequence conflict" description="In Ref. 1; AAF64304." evidence="10" ref="1">
    <original>S</original>
    <variation>A</variation>
    <location>
        <position position="4"/>
    </location>
</feature>
<feature type="modified residue" description="Phosphoserine" evidence="22">
    <location sequence="Q9NYF8-4">
        <position position="339"/>
    </location>
</feature>
<protein>
    <recommendedName>
        <fullName>Bcl-2-associated transcription factor 1</fullName>
        <shortName>Btf</shortName>
    </recommendedName>
    <alternativeName>
        <fullName>BCLAF1 and THRAP3 family member 1</fullName>
    </alternativeName>
</protein>
<name>BCLF1_HUMAN</name>
<dbReference type="EMBL" id="AF249273">
    <property type="protein sequence ID" value="AAF64304.1"/>
    <property type="molecule type" value="mRNA"/>
</dbReference>
<dbReference type="EMBL" id="D79986">
    <property type="protein sequence ID" value="BAA11481.2"/>
    <property type="status" value="ALT_INIT"/>
    <property type="molecule type" value="mRNA"/>
</dbReference>
<dbReference type="EMBL" id="AL121713">
    <property type="status" value="NOT_ANNOTATED_CDS"/>
    <property type="molecule type" value="Genomic_DNA"/>
</dbReference>
<dbReference type="EMBL" id="CH471051">
    <property type="protein sequence ID" value="EAW47950.1"/>
    <property type="molecule type" value="Genomic_DNA"/>
</dbReference>
<dbReference type="EMBL" id="CH471051">
    <property type="protein sequence ID" value="EAW47951.1"/>
    <property type="molecule type" value="Genomic_DNA"/>
</dbReference>
<dbReference type="EMBL" id="BC047687">
    <property type="protein sequence ID" value="AAH47687.1"/>
    <property type="status" value="ALT_SEQ"/>
    <property type="molecule type" value="mRNA"/>
</dbReference>
<dbReference type="EMBL" id="BC047887">
    <property type="protein sequence ID" value="AAH47887.1"/>
    <property type="status" value="ALT_SEQ"/>
    <property type="molecule type" value="mRNA"/>
</dbReference>
<dbReference type="EMBL" id="BC056894">
    <property type="protein sequence ID" value="AAH56894.1"/>
    <property type="status" value="ALT_SEQ"/>
    <property type="molecule type" value="mRNA"/>
</dbReference>
<dbReference type="EMBL" id="BC063846">
    <property type="protein sequence ID" value="AAH63846.1"/>
    <property type="status" value="ALT_SEQ"/>
    <property type="molecule type" value="mRNA"/>
</dbReference>
<dbReference type="EMBL" id="BC132780">
    <property type="protein sequence ID" value="AAI32781.1"/>
    <property type="molecule type" value="mRNA"/>
</dbReference>
<dbReference type="EMBL" id="BC144281">
    <property type="protein sequence ID" value="AAI44282.1"/>
    <property type="molecule type" value="mRNA"/>
</dbReference>
<dbReference type="CCDS" id="CCDS47485.1">
    <molecule id="Q9NYF8-4"/>
</dbReference>
<dbReference type="CCDS" id="CCDS47486.1">
    <molecule id="Q9NYF8-3"/>
</dbReference>
<dbReference type="CCDS" id="CCDS5177.1">
    <molecule id="Q9NYF8-1"/>
</dbReference>
<dbReference type="CCDS" id="CCDS75525.1">
    <molecule id="Q9NYF8-2"/>
</dbReference>
<dbReference type="RefSeq" id="NP_001070908.1">
    <molecule id="Q9NYF8-3"/>
    <property type="nucleotide sequence ID" value="NM_001077440.3"/>
</dbReference>
<dbReference type="RefSeq" id="NP_001070909.1">
    <molecule id="Q9NYF8-4"/>
    <property type="nucleotide sequence ID" value="NM_001077441.3"/>
</dbReference>
<dbReference type="RefSeq" id="NP_001287967.1">
    <molecule id="Q9NYF8-2"/>
    <property type="nucleotide sequence ID" value="NM_001301038.3"/>
</dbReference>
<dbReference type="RefSeq" id="NP_001373629.1">
    <molecule id="Q9NYF8-1"/>
    <property type="nucleotide sequence ID" value="NM_001386700.1"/>
</dbReference>
<dbReference type="RefSeq" id="NP_001373630.1">
    <molecule id="Q9NYF8-1"/>
    <property type="nucleotide sequence ID" value="NM_001386701.1"/>
</dbReference>
<dbReference type="RefSeq" id="NP_001373631.1">
    <molecule id="Q9NYF8-4"/>
    <property type="nucleotide sequence ID" value="NM_001386702.1"/>
</dbReference>
<dbReference type="RefSeq" id="NP_055554.1">
    <molecule id="Q9NYF8-1"/>
    <property type="nucleotide sequence ID" value="NM_014739.3"/>
</dbReference>
<dbReference type="PDB" id="7RJN">
    <property type="method" value="X-ray"/>
    <property type="resolution" value="1.95 A"/>
    <property type="chains" value="C/D=330-339"/>
</dbReference>
<dbReference type="PDB" id="7RJR">
    <property type="method" value="X-ray"/>
    <property type="resolution" value="1.45 A"/>
    <property type="chains" value="B=330-339"/>
</dbReference>
<dbReference type="PDBsum" id="7RJN"/>
<dbReference type="PDBsum" id="7RJR"/>
<dbReference type="SMR" id="Q9NYF8"/>
<dbReference type="BioGRID" id="115118">
    <property type="interactions" value="342"/>
</dbReference>
<dbReference type="ComplexPortal" id="CPX-2653">
    <property type="entry name" value="SNIP1/SkIP associated RNA-processing complex"/>
</dbReference>
<dbReference type="CORUM" id="Q9NYF8"/>
<dbReference type="FunCoup" id="Q9NYF8">
    <property type="interactions" value="3830"/>
</dbReference>
<dbReference type="IntAct" id="Q9NYF8">
    <property type="interactions" value="198"/>
</dbReference>
<dbReference type="MINT" id="Q9NYF8"/>
<dbReference type="STRING" id="9606.ENSP00000435210"/>
<dbReference type="GlyGen" id="Q9NYF8">
    <property type="glycosylation" value="11 sites, 1 N-linked glycan (1 site), 1 O-linked glycan (10 sites)"/>
</dbReference>
<dbReference type="iPTMnet" id="Q9NYF8"/>
<dbReference type="MetOSite" id="Q9NYF8"/>
<dbReference type="PhosphoSitePlus" id="Q9NYF8"/>
<dbReference type="SwissPalm" id="Q9NYF8"/>
<dbReference type="BioMuta" id="BCLAF1"/>
<dbReference type="DMDM" id="47605556"/>
<dbReference type="jPOST" id="Q9NYF8"/>
<dbReference type="MassIVE" id="Q9NYF8"/>
<dbReference type="PaxDb" id="9606-ENSP00000435210"/>
<dbReference type="PeptideAtlas" id="Q9NYF8"/>
<dbReference type="ProteomicsDB" id="83221">
    <molecule id="Q9NYF8-1"/>
</dbReference>
<dbReference type="ProteomicsDB" id="83222">
    <molecule id="Q9NYF8-2"/>
</dbReference>
<dbReference type="ProteomicsDB" id="83223">
    <molecule id="Q9NYF8-3"/>
</dbReference>
<dbReference type="ProteomicsDB" id="83224">
    <molecule id="Q9NYF8-4"/>
</dbReference>
<dbReference type="Pumba" id="Q9NYF8"/>
<dbReference type="Antibodypedia" id="1744">
    <property type="antibodies" value="333 antibodies from 32 providers"/>
</dbReference>
<dbReference type="DNASU" id="9774"/>
<dbReference type="Ensembl" id="ENST00000353331.8">
    <molecule id="Q9NYF8-3"/>
    <property type="protein sequence ID" value="ENSP00000229446.5"/>
    <property type="gene ID" value="ENSG00000029363.17"/>
</dbReference>
<dbReference type="Ensembl" id="ENST00000392348.6">
    <molecule id="Q9NYF8-3"/>
    <property type="protein sequence ID" value="ENSP00000376159.2"/>
    <property type="gene ID" value="ENSG00000029363.17"/>
</dbReference>
<dbReference type="Ensembl" id="ENST00000527759.5">
    <molecule id="Q9NYF8-2"/>
    <property type="protein sequence ID" value="ENSP00000434826.1"/>
    <property type="gene ID" value="ENSG00000029363.17"/>
</dbReference>
<dbReference type="Ensembl" id="ENST00000530767.5">
    <molecule id="Q9NYF8-4"/>
    <property type="protein sequence ID" value="ENSP00000436501.1"/>
    <property type="gene ID" value="ENSG00000029363.17"/>
</dbReference>
<dbReference type="Ensembl" id="ENST00000531224.6">
    <molecule id="Q9NYF8-1"/>
    <property type="protein sequence ID" value="ENSP00000435210.1"/>
    <property type="gene ID" value="ENSG00000029363.17"/>
</dbReference>
<dbReference type="GeneID" id="9774"/>
<dbReference type="KEGG" id="hsa:9774"/>
<dbReference type="MANE-Select" id="ENST00000531224.6">
    <property type="protein sequence ID" value="ENSP00000435210.1"/>
    <property type="RefSeq nucleotide sequence ID" value="NM_014739.3"/>
    <property type="RefSeq protein sequence ID" value="NP_055554.1"/>
</dbReference>
<dbReference type="UCSC" id="uc003qgw.2">
    <molecule id="Q9NYF8-1"/>
    <property type="organism name" value="human"/>
</dbReference>
<dbReference type="AGR" id="HGNC:16863"/>
<dbReference type="CTD" id="9774"/>
<dbReference type="DisGeNET" id="9774"/>
<dbReference type="GeneCards" id="BCLAF1"/>
<dbReference type="HGNC" id="HGNC:16863">
    <property type="gene designation" value="BCLAF1"/>
</dbReference>
<dbReference type="HPA" id="ENSG00000029363">
    <property type="expression patterns" value="Tissue enhanced (bone)"/>
</dbReference>
<dbReference type="MIM" id="612588">
    <property type="type" value="gene"/>
</dbReference>
<dbReference type="neXtProt" id="NX_Q9NYF8"/>
<dbReference type="OpenTargets" id="ENSG00000029363"/>
<dbReference type="PharmGKB" id="PA134868035"/>
<dbReference type="VEuPathDB" id="HostDB:ENSG00000029363"/>
<dbReference type="eggNOG" id="ENOG502QZG7">
    <property type="taxonomic scope" value="Eukaryota"/>
</dbReference>
<dbReference type="GeneTree" id="ENSGT00950000183163"/>
<dbReference type="HOGENOM" id="CLU_014485_0_0_1"/>
<dbReference type="InParanoid" id="Q9NYF8"/>
<dbReference type="OMA" id="KEENQKX"/>
<dbReference type="OrthoDB" id="9948513at2759"/>
<dbReference type="PAN-GO" id="Q9NYF8">
    <property type="GO annotations" value="4 GO annotations based on evolutionary models"/>
</dbReference>
<dbReference type="PhylomeDB" id="Q9NYF8"/>
<dbReference type="TreeFam" id="TF335939"/>
<dbReference type="PathwayCommons" id="Q9NYF8"/>
<dbReference type="SignaLink" id="Q9NYF8"/>
<dbReference type="SIGNOR" id="Q9NYF8"/>
<dbReference type="BioGRID-ORCS" id="9774">
    <property type="hits" value="635 hits in 1125 CRISPR screens"/>
</dbReference>
<dbReference type="CD-CODE" id="804901D1">
    <property type="entry name" value="Nuclear speckle"/>
</dbReference>
<dbReference type="CD-CODE" id="DEE660B4">
    <property type="entry name" value="Stress granule"/>
</dbReference>
<dbReference type="ChiTaRS" id="BCLAF1">
    <property type="organism name" value="human"/>
</dbReference>
<dbReference type="GeneWiki" id="BCLAF1"/>
<dbReference type="GenomeRNAi" id="9774"/>
<dbReference type="Pharos" id="Q9NYF8">
    <property type="development level" value="Tbio"/>
</dbReference>
<dbReference type="PRO" id="PR:Q9NYF8"/>
<dbReference type="Proteomes" id="UP000005640">
    <property type="component" value="Chromosome 6"/>
</dbReference>
<dbReference type="RNAct" id="Q9NYF8">
    <property type="molecule type" value="protein"/>
</dbReference>
<dbReference type="Bgee" id="ENSG00000029363">
    <property type="expression patterns" value="Expressed in calcaneal tendon and 211 other cell types or tissues"/>
</dbReference>
<dbReference type="ExpressionAtlas" id="Q9NYF8">
    <property type="expression patterns" value="baseline and differential"/>
</dbReference>
<dbReference type="GO" id="GO:0005737">
    <property type="term" value="C:cytoplasm"/>
    <property type="evidence" value="ECO:0007669"/>
    <property type="project" value="UniProtKB-SubCell"/>
</dbReference>
<dbReference type="GO" id="GO:0016592">
    <property type="term" value="C:mediator complex"/>
    <property type="evidence" value="ECO:0000318"/>
    <property type="project" value="GO_Central"/>
</dbReference>
<dbReference type="GO" id="GO:0016607">
    <property type="term" value="C:nuclear speck"/>
    <property type="evidence" value="ECO:0000314"/>
    <property type="project" value="HPA"/>
</dbReference>
<dbReference type="GO" id="GO:0005654">
    <property type="term" value="C:nucleoplasm"/>
    <property type="evidence" value="ECO:0000314"/>
    <property type="project" value="UniProtKB"/>
</dbReference>
<dbReference type="GO" id="GO:0005634">
    <property type="term" value="C:nucleus"/>
    <property type="evidence" value="ECO:0000314"/>
    <property type="project" value="MGI"/>
</dbReference>
<dbReference type="GO" id="GO:0003677">
    <property type="term" value="F:DNA binding"/>
    <property type="evidence" value="ECO:0000314"/>
    <property type="project" value="MGI"/>
</dbReference>
<dbReference type="GO" id="GO:0003723">
    <property type="term" value="F:RNA binding"/>
    <property type="evidence" value="ECO:0007005"/>
    <property type="project" value="UniProtKB"/>
</dbReference>
<dbReference type="GO" id="GO:0003712">
    <property type="term" value="F:transcription coregulator activity"/>
    <property type="evidence" value="ECO:0000318"/>
    <property type="project" value="GO_Central"/>
</dbReference>
<dbReference type="GO" id="GO:0006915">
    <property type="term" value="P:apoptotic process"/>
    <property type="evidence" value="ECO:0000304"/>
    <property type="project" value="UniProtKB"/>
</dbReference>
<dbReference type="GO" id="GO:1990830">
    <property type="term" value="P:cellular response to leukemia inhibitory factor"/>
    <property type="evidence" value="ECO:0007669"/>
    <property type="project" value="Ensembl"/>
</dbReference>
<dbReference type="GO" id="GO:0006974">
    <property type="term" value="P:DNA damage response"/>
    <property type="evidence" value="ECO:0000315"/>
    <property type="project" value="UniProtKB"/>
</dbReference>
<dbReference type="GO" id="GO:0045892">
    <property type="term" value="P:negative regulation of DNA-templated transcription"/>
    <property type="evidence" value="ECO:0000314"/>
    <property type="project" value="MGI"/>
</dbReference>
<dbReference type="GO" id="GO:0043065">
    <property type="term" value="P:positive regulation of apoptotic process"/>
    <property type="evidence" value="ECO:0000314"/>
    <property type="project" value="MGI"/>
</dbReference>
<dbReference type="GO" id="GO:2000144">
    <property type="term" value="P:positive regulation of DNA-templated transcription initiation"/>
    <property type="evidence" value="ECO:0000315"/>
    <property type="project" value="UniProtKB"/>
</dbReference>
<dbReference type="GO" id="GO:2001244">
    <property type="term" value="P:positive regulation of intrinsic apoptotic signaling pathway"/>
    <property type="evidence" value="ECO:0000315"/>
    <property type="project" value="UniProtKB"/>
</dbReference>
<dbReference type="GO" id="GO:0045944">
    <property type="term" value="P:positive regulation of transcription by RNA polymerase II"/>
    <property type="evidence" value="ECO:0000318"/>
    <property type="project" value="GO_Central"/>
</dbReference>
<dbReference type="InterPro" id="IPR029199">
    <property type="entry name" value="THRAP3_BCLAF1"/>
</dbReference>
<dbReference type="PANTHER" id="PTHR15268:SF4">
    <property type="entry name" value="BCL-2-ASSOCIATED TRANSCRIPTION FACTOR 1"/>
    <property type="match status" value="1"/>
</dbReference>
<dbReference type="PANTHER" id="PTHR15268">
    <property type="entry name" value="THRAP3/BCLAF1"/>
    <property type="match status" value="1"/>
</dbReference>
<dbReference type="Pfam" id="PF15440">
    <property type="entry name" value="THRAP3_BCLAF1"/>
    <property type="match status" value="1"/>
</dbReference>
<accession>Q9NYF8</accession>
<accession>A2RU75</accession>
<accession>B7ZM58</accession>
<accession>E1P586</accession>
<accession>Q14673</accession>
<accession>Q86WU6</accession>
<accession>Q86WY0</accession>
<reference key="1">
    <citation type="journal article" date="1999" name="Mol. Cell. Biol.">
        <title>Btf, a novel death-promoting transcriptional repressor that interacts with Bcl-2-related proteins.</title>
        <authorList>
            <person name="Kasof G.M."/>
            <person name="Goyal L."/>
            <person name="White E."/>
        </authorList>
    </citation>
    <scope>NUCLEOTIDE SEQUENCE [MRNA] (ISOFORMS 2 AND 3)</scope>
</reference>
<reference key="2">
    <citation type="journal article" date="1996" name="DNA Res.">
        <title>Prediction of the coding sequences of unidentified human genes. V. The coding sequences of 40 new genes (KIAA0161-KIAA0200) deduced by analysis of cDNA clones from human cell line KG-1.</title>
        <authorList>
            <person name="Nagase T."/>
            <person name="Seki N."/>
            <person name="Ishikawa K."/>
            <person name="Tanaka A."/>
            <person name="Nomura N."/>
        </authorList>
    </citation>
    <scope>NUCLEOTIDE SEQUENCE [LARGE SCALE MRNA] (ISOFORM 1)</scope>
    <source>
        <tissue>Bone marrow</tissue>
    </source>
</reference>
<reference key="3">
    <citation type="journal article" date="2003" name="Nature">
        <title>The DNA sequence and analysis of human chromosome 6.</title>
        <authorList>
            <person name="Mungall A.J."/>
            <person name="Palmer S.A."/>
            <person name="Sims S.K."/>
            <person name="Edwards C.A."/>
            <person name="Ashurst J.L."/>
            <person name="Wilming L."/>
            <person name="Jones M.C."/>
            <person name="Horton R."/>
            <person name="Hunt S.E."/>
            <person name="Scott C.E."/>
            <person name="Gilbert J.G.R."/>
            <person name="Clamp M.E."/>
            <person name="Bethel G."/>
            <person name="Milne S."/>
            <person name="Ainscough R."/>
            <person name="Almeida J.P."/>
            <person name="Ambrose K.D."/>
            <person name="Andrews T.D."/>
            <person name="Ashwell R.I.S."/>
            <person name="Babbage A.K."/>
            <person name="Bagguley C.L."/>
            <person name="Bailey J."/>
            <person name="Banerjee R."/>
            <person name="Barker D.J."/>
            <person name="Barlow K.F."/>
            <person name="Bates K."/>
            <person name="Beare D.M."/>
            <person name="Beasley H."/>
            <person name="Beasley O."/>
            <person name="Bird C.P."/>
            <person name="Blakey S.E."/>
            <person name="Bray-Allen S."/>
            <person name="Brook J."/>
            <person name="Brown A.J."/>
            <person name="Brown J.Y."/>
            <person name="Burford D.C."/>
            <person name="Burrill W."/>
            <person name="Burton J."/>
            <person name="Carder C."/>
            <person name="Carter N.P."/>
            <person name="Chapman J.C."/>
            <person name="Clark S.Y."/>
            <person name="Clark G."/>
            <person name="Clee C.M."/>
            <person name="Clegg S."/>
            <person name="Cobley V."/>
            <person name="Collier R.E."/>
            <person name="Collins J.E."/>
            <person name="Colman L.K."/>
            <person name="Corby N.R."/>
            <person name="Coville G.J."/>
            <person name="Culley K.M."/>
            <person name="Dhami P."/>
            <person name="Davies J."/>
            <person name="Dunn M."/>
            <person name="Earthrowl M.E."/>
            <person name="Ellington A.E."/>
            <person name="Evans K.A."/>
            <person name="Faulkner L."/>
            <person name="Francis M.D."/>
            <person name="Frankish A."/>
            <person name="Frankland J."/>
            <person name="French L."/>
            <person name="Garner P."/>
            <person name="Garnett J."/>
            <person name="Ghori M.J."/>
            <person name="Gilby L.M."/>
            <person name="Gillson C.J."/>
            <person name="Glithero R.J."/>
            <person name="Grafham D.V."/>
            <person name="Grant M."/>
            <person name="Gribble S."/>
            <person name="Griffiths C."/>
            <person name="Griffiths M.N.D."/>
            <person name="Hall R."/>
            <person name="Halls K.S."/>
            <person name="Hammond S."/>
            <person name="Harley J.L."/>
            <person name="Hart E.A."/>
            <person name="Heath P.D."/>
            <person name="Heathcott R."/>
            <person name="Holmes S.J."/>
            <person name="Howden P.J."/>
            <person name="Howe K.L."/>
            <person name="Howell G.R."/>
            <person name="Huckle E."/>
            <person name="Humphray S.J."/>
            <person name="Humphries M.D."/>
            <person name="Hunt A.R."/>
            <person name="Johnson C.M."/>
            <person name="Joy A.A."/>
            <person name="Kay M."/>
            <person name="Keenan S.J."/>
            <person name="Kimberley A.M."/>
            <person name="King A."/>
            <person name="Laird G.K."/>
            <person name="Langford C."/>
            <person name="Lawlor S."/>
            <person name="Leongamornlert D.A."/>
            <person name="Leversha M."/>
            <person name="Lloyd C.R."/>
            <person name="Lloyd D.M."/>
            <person name="Loveland J.E."/>
            <person name="Lovell J."/>
            <person name="Martin S."/>
            <person name="Mashreghi-Mohammadi M."/>
            <person name="Maslen G.L."/>
            <person name="Matthews L."/>
            <person name="McCann O.T."/>
            <person name="McLaren S.J."/>
            <person name="McLay K."/>
            <person name="McMurray A."/>
            <person name="Moore M.J.F."/>
            <person name="Mullikin J.C."/>
            <person name="Niblett D."/>
            <person name="Nickerson T."/>
            <person name="Novik K.L."/>
            <person name="Oliver K."/>
            <person name="Overton-Larty E.K."/>
            <person name="Parker A."/>
            <person name="Patel R."/>
            <person name="Pearce A.V."/>
            <person name="Peck A.I."/>
            <person name="Phillimore B.J.C.T."/>
            <person name="Phillips S."/>
            <person name="Plumb R.W."/>
            <person name="Porter K.M."/>
            <person name="Ramsey Y."/>
            <person name="Ranby S.A."/>
            <person name="Rice C.M."/>
            <person name="Ross M.T."/>
            <person name="Searle S.M."/>
            <person name="Sehra H.K."/>
            <person name="Sheridan E."/>
            <person name="Skuce C.D."/>
            <person name="Smith S."/>
            <person name="Smith M."/>
            <person name="Spraggon L."/>
            <person name="Squares S.L."/>
            <person name="Steward C.A."/>
            <person name="Sycamore N."/>
            <person name="Tamlyn-Hall G."/>
            <person name="Tester J."/>
            <person name="Theaker A.J."/>
            <person name="Thomas D.W."/>
            <person name="Thorpe A."/>
            <person name="Tracey A."/>
            <person name="Tromans A."/>
            <person name="Tubby B."/>
            <person name="Wall M."/>
            <person name="Wallis J.M."/>
            <person name="West A.P."/>
            <person name="White S.S."/>
            <person name="Whitehead S.L."/>
            <person name="Whittaker H."/>
            <person name="Wild A."/>
            <person name="Willey D.J."/>
            <person name="Wilmer T.E."/>
            <person name="Wood J.M."/>
            <person name="Wray P.W."/>
            <person name="Wyatt J.C."/>
            <person name="Young L."/>
            <person name="Younger R.M."/>
            <person name="Bentley D.R."/>
            <person name="Coulson A."/>
            <person name="Durbin R.M."/>
            <person name="Hubbard T."/>
            <person name="Sulston J.E."/>
            <person name="Dunham I."/>
            <person name="Rogers J."/>
            <person name="Beck S."/>
        </authorList>
    </citation>
    <scope>NUCLEOTIDE SEQUENCE [LARGE SCALE GENOMIC DNA] (ISOFORM 1)</scope>
</reference>
<reference key="4">
    <citation type="submission" date="2005-09" db="EMBL/GenBank/DDBJ databases">
        <authorList>
            <person name="Mural R.J."/>
            <person name="Istrail S."/>
            <person name="Sutton G.G."/>
            <person name="Florea L."/>
            <person name="Halpern A.L."/>
            <person name="Mobarry C.M."/>
            <person name="Lippert R."/>
            <person name="Walenz B."/>
            <person name="Shatkay H."/>
            <person name="Dew I."/>
            <person name="Miller J.R."/>
            <person name="Flanigan M.J."/>
            <person name="Edwards N.J."/>
            <person name="Bolanos R."/>
            <person name="Fasulo D."/>
            <person name="Halldorsson B.V."/>
            <person name="Hannenhalli S."/>
            <person name="Turner R."/>
            <person name="Yooseph S."/>
            <person name="Lu F."/>
            <person name="Nusskern D.R."/>
            <person name="Shue B.C."/>
            <person name="Zheng X.H."/>
            <person name="Zhong F."/>
            <person name="Delcher A.L."/>
            <person name="Huson D.H."/>
            <person name="Kravitz S.A."/>
            <person name="Mouchard L."/>
            <person name="Reinert K."/>
            <person name="Remington K.A."/>
            <person name="Clark A.G."/>
            <person name="Waterman M.S."/>
            <person name="Eichler E.E."/>
            <person name="Adams M.D."/>
            <person name="Hunkapiller M.W."/>
            <person name="Myers E.W."/>
            <person name="Venter J.C."/>
        </authorList>
    </citation>
    <scope>NUCLEOTIDE SEQUENCE [LARGE SCALE GENOMIC DNA]</scope>
</reference>
<reference key="5">
    <citation type="journal article" date="2004" name="Genome Res.">
        <title>The status, quality, and expansion of the NIH full-length cDNA project: the Mammalian Gene Collection (MGC).</title>
        <authorList>
            <consortium name="The MGC Project Team"/>
        </authorList>
    </citation>
    <scope>NUCLEOTIDE SEQUENCE [LARGE SCALE MRNA] (ISOFORMS 1 AND 2)</scope>
    <scope>NUCLEOTIDE SEQUENCE [LARGE SCALE MRNA] OF 1-676 (ISOFORM 4)</scope>
    <source>
        <tissue>Brain</tissue>
        <tissue>Pancreas</tissue>
        <tissue>Testis</tissue>
        <tissue>Uterus</tissue>
    </source>
</reference>
<reference key="6">
    <citation type="submission" date="2008-04" db="UniProtKB">
        <authorList>
            <person name="Bienvenut W.V."/>
            <person name="Heiserich L."/>
            <person name="Boulahbel H."/>
            <person name="Gottlieb E."/>
        </authorList>
    </citation>
    <scope>PROTEIN SEQUENCE OF 168-182; 189-204; 256-271; 284-298; 304-312; 319-332; 394-409; 422-439; 461-475; 505-517; 525-534; 537-548; 551-581; 587-593; 623-631; 654-664; 785-796; 832-842 AND 846-852</scope>
    <scope>PHOSPHORYLATION AT SER-177; SER-268; SER-290; SER-512; SER-531 AND SER-658</scope>
    <scope>IDENTIFICATION BY MASS SPECTROMETRY</scope>
    <source>
        <tissue>Colon carcinoma</tissue>
    </source>
</reference>
<reference key="7">
    <citation type="journal article" date="2004" name="Eur. J. Biochem.">
        <title>Emerin binding to Btf, a death-promoting transcriptional repressor, is disrupted by a missense mutation that causes Emery-Dreifuss muscular dystrophy.</title>
        <authorList>
            <person name="Haraguchi T."/>
            <person name="Holaska J.M."/>
            <person name="Yamane M."/>
            <person name="Koujin T."/>
            <person name="Hashiguchi N."/>
            <person name="Mori C."/>
            <person name="Wilson K.L."/>
            <person name="Hiraoka Y."/>
        </authorList>
    </citation>
    <scope>INTERACTION WITH EMD</scope>
</reference>
<reference key="8">
    <citation type="journal article" date="2006" name="Cell">
        <title>Global, in vivo, and site-specific phosphorylation dynamics in signaling networks.</title>
        <authorList>
            <person name="Olsen J.V."/>
            <person name="Blagoev B."/>
            <person name="Gnad F."/>
            <person name="Macek B."/>
            <person name="Kumar C."/>
            <person name="Mortensen P."/>
            <person name="Mann M."/>
        </authorList>
    </citation>
    <scope>PHOSPHORYLATION [LARGE SCALE ANALYSIS] AT SER-177; SER-389; SER-397; THR-402; SER-531 AND SER-648</scope>
    <scope>IDENTIFICATION BY MASS SPECTROMETRY [LARGE SCALE ANALYSIS]</scope>
    <source>
        <tissue>Cervix carcinoma</tissue>
    </source>
</reference>
<reference key="9">
    <citation type="journal article" date="2007" name="Electrophoresis">
        <title>Toward a global characterization of the phosphoproteome in prostate cancer cells: identification of phosphoproteins in the LNCaP cell line.</title>
        <authorList>
            <person name="Giorgianni F."/>
            <person name="Zhao Y."/>
            <person name="Desiderio D.M."/>
            <person name="Beranova-Giorgianni S."/>
        </authorList>
    </citation>
    <scope>PHOSPHORYLATION [LARGE SCALE ANALYSIS] AT SER-397</scope>
    <scope>IDENTIFICATION BY MASS SPECTROMETRY [LARGE SCALE ANALYSIS]</scope>
    <source>
        <tissue>Prostate cancer</tissue>
    </source>
</reference>
<reference key="10">
    <citation type="journal article" date="2007" name="J. Proteome Res.">
        <title>Improved titanium dioxide enrichment of phosphopeptides from HeLa cells and high confident phosphopeptide identification by cross-validation of MS/MS and MS/MS/MS spectra.</title>
        <authorList>
            <person name="Yu L.R."/>
            <person name="Zhu Z."/>
            <person name="Chan K.C."/>
            <person name="Issaq H.J."/>
            <person name="Dimitrov D.S."/>
            <person name="Veenstra T.D."/>
        </authorList>
    </citation>
    <scope>IDENTIFICATION BY MASS SPECTROMETRY [LARGE SCALE ANALYSIS]</scope>
    <source>
        <tissue>Cervix carcinoma</tissue>
    </source>
</reference>
<reference key="11">
    <citation type="journal article" date="2008" name="Cancer Res.">
        <title>Regulation of cyclin D1 RNA stability by SNIP1.</title>
        <authorList>
            <person name="Bracken C.P."/>
            <person name="Wall S.J."/>
            <person name="Barre B."/>
            <person name="Panov K.I."/>
            <person name="Ajuh P.M."/>
            <person name="Perkins N.D."/>
        </authorList>
    </citation>
    <scope>FUNCTION</scope>
    <scope>IDENTIFICATION IN THE SNARP COMPLEX</scope>
</reference>
<reference key="12">
    <citation type="journal article" date="2008" name="J. Proteome Res.">
        <title>Phosphorylation analysis of primary human T lymphocytes using sequential IMAC and titanium oxide enrichment.</title>
        <authorList>
            <person name="Carrascal M."/>
            <person name="Ovelleiro D."/>
            <person name="Casas V."/>
            <person name="Gay M."/>
            <person name="Abian J."/>
        </authorList>
    </citation>
    <scope>PHOSPHORYLATION [LARGE SCALE ANALYSIS] AT SER-397</scope>
    <scope>IDENTIFICATION BY MASS SPECTROMETRY [LARGE SCALE ANALYSIS]</scope>
    <source>
        <tissue>T-cell</tissue>
    </source>
</reference>
<reference key="13">
    <citation type="journal article" date="2008" name="Proc. Natl. Acad. Sci. U.S.A.">
        <title>A quantitative atlas of mitotic phosphorylation.</title>
        <authorList>
            <person name="Dephoure N."/>
            <person name="Zhou C."/>
            <person name="Villen J."/>
            <person name="Beausoleil S.A."/>
            <person name="Bakalarski C.E."/>
            <person name="Elledge S.J."/>
            <person name="Gygi S.P."/>
        </authorList>
    </citation>
    <scope>PHOSPHORYLATION [LARGE SCALE ANALYSIS] AT SER-181; SER-222; SER-264; SER-268; TYR-284; SER-290; THR-341; SER-385; SER-389; SER-397; THR-402; SER-512; SER-531; SER-578 AND SER-658</scope>
    <scope>IDENTIFICATION BY MASS SPECTROMETRY [LARGE SCALE ANALYSIS]</scope>
    <source>
        <tissue>Cervix carcinoma</tissue>
    </source>
</reference>
<reference key="14">
    <citation type="journal article" date="2008" name="Proteomics">
        <title>Large-scale phosphoproteome analysis of human liver tissue by enrichment and fractionation of phosphopeptides with strong anion exchange chromatography.</title>
        <authorList>
            <person name="Han G."/>
            <person name="Ye M."/>
            <person name="Zhou H."/>
            <person name="Jiang X."/>
            <person name="Feng S."/>
            <person name="Jiang X."/>
            <person name="Tian R."/>
            <person name="Wan D."/>
            <person name="Zou H."/>
            <person name="Gu J."/>
        </authorList>
    </citation>
    <scope>PHOSPHORYLATION [LARGE SCALE ANALYSIS] AT SER-177 AND SER-397</scope>
    <scope>IDENTIFICATION BY MASS SPECTROMETRY [LARGE SCALE ANALYSIS]</scope>
    <source>
        <tissue>Liver</tissue>
    </source>
</reference>
<reference key="15">
    <citation type="journal article" date="2009" name="Anal. Chem.">
        <title>Lys-N and trypsin cover complementary parts of the phosphoproteome in a refined SCX-based approach.</title>
        <authorList>
            <person name="Gauci S."/>
            <person name="Helbig A.O."/>
            <person name="Slijper M."/>
            <person name="Krijgsveld J."/>
            <person name="Heck A.J."/>
            <person name="Mohammed S."/>
        </authorList>
    </citation>
    <scope>IDENTIFICATION BY MASS SPECTROMETRY [LARGE SCALE ANALYSIS]</scope>
</reference>
<reference key="16">
    <citation type="journal article" date="2009" name="Sci. Signal.">
        <title>Quantitative phosphoproteomic analysis of T cell receptor signaling reveals system-wide modulation of protein-protein interactions.</title>
        <authorList>
            <person name="Mayya V."/>
            <person name="Lundgren D.H."/>
            <person name="Hwang S.-I."/>
            <person name="Rezaul K."/>
            <person name="Wu L."/>
            <person name="Eng J.K."/>
            <person name="Rodionov V."/>
            <person name="Han D.K."/>
        </authorList>
    </citation>
    <scope>PHOSPHORYLATION [LARGE SCALE ANALYSIS] AT SER-177; SER-222; SER-290; SER-385; SER-397; THR-402 AND SER-512</scope>
    <scope>IDENTIFICATION BY MASS SPECTROMETRY [LARGE SCALE ANALYSIS]</scope>
    <source>
        <tissue>Leukemic T-cell</tissue>
    </source>
</reference>
<reference key="17">
    <citation type="journal article" date="2009" name="Science">
        <title>Lysine acetylation targets protein complexes and co-regulates major cellular functions.</title>
        <authorList>
            <person name="Choudhary C."/>
            <person name="Kumar C."/>
            <person name="Gnad F."/>
            <person name="Nielsen M.L."/>
            <person name="Rehman M."/>
            <person name="Walther T.C."/>
            <person name="Olsen J.V."/>
            <person name="Mann M."/>
        </authorList>
    </citation>
    <scope>ACETYLATION [LARGE SCALE ANALYSIS] AT LYS-152 AND LYS-437</scope>
    <scope>IDENTIFICATION BY MASS SPECTROMETRY [LARGE SCALE ANALYSIS]</scope>
</reference>
<reference key="18">
    <citation type="journal article" date="2010" name="Sci. Signal.">
        <title>Quantitative phosphoproteomics reveals widespread full phosphorylation site occupancy during mitosis.</title>
        <authorList>
            <person name="Olsen J.V."/>
            <person name="Vermeulen M."/>
            <person name="Santamaria A."/>
            <person name="Kumar C."/>
            <person name="Miller M.L."/>
            <person name="Jensen L.J."/>
            <person name="Gnad F."/>
            <person name="Cox J."/>
            <person name="Jensen T.S."/>
            <person name="Nigg E.A."/>
            <person name="Brunak S."/>
            <person name="Mann M."/>
        </authorList>
    </citation>
    <scope>PHOSPHORYLATION [LARGE SCALE ANALYSIS] AT SER-102; SER-104; SER-177; SER-196; SER-198; SER-222; SER-268; SER-290; SER-297; SER-385; SER-397; THR-402; SER-472; SER-496; SER-502; SER-512; SER-531; THR-566; SER-578; SER-658 AND SER-690</scope>
    <scope>IDENTIFICATION BY MASS SPECTROMETRY [LARGE SCALE ANALYSIS]</scope>
    <source>
        <tissue>Cervix carcinoma</tissue>
    </source>
</reference>
<reference key="19">
    <citation type="journal article" date="2011" name="BMC Syst. Biol.">
        <title>Initial characterization of the human central proteome.</title>
        <authorList>
            <person name="Burkard T.R."/>
            <person name="Planyavsky M."/>
            <person name="Kaupe I."/>
            <person name="Breitwieser F.P."/>
            <person name="Buerckstuemmer T."/>
            <person name="Bennett K.L."/>
            <person name="Superti-Furga G."/>
            <person name="Colinge J."/>
        </authorList>
    </citation>
    <scope>IDENTIFICATION BY MASS SPECTROMETRY [LARGE SCALE ANALYSIS]</scope>
</reference>
<reference key="20">
    <citation type="journal article" date="2011" name="Sci. Signal.">
        <title>System-wide temporal characterization of the proteome and phosphoproteome of human embryonic stem cell differentiation.</title>
        <authorList>
            <person name="Rigbolt K.T."/>
            <person name="Prokhorova T.A."/>
            <person name="Akimov V."/>
            <person name="Henningsen J."/>
            <person name="Johansen P.T."/>
            <person name="Kratchmarova I."/>
            <person name="Kassem M."/>
            <person name="Mann M."/>
            <person name="Olsen J.V."/>
            <person name="Blagoev B."/>
        </authorList>
    </citation>
    <scope>PHOSPHORYLATION [LARGE SCALE ANALYSIS] AT SER-177; SER-196; SER-198; SER-222; SER-268; SER-285; SER-290; SER-385; SER-397; THR-494; SER-496; SER-512; SER-531; SER-658; SER-660 AND SER-760</scope>
    <scope>IDENTIFICATION BY MASS SPECTROMETRY [LARGE SCALE ANALYSIS]</scope>
</reference>
<reference key="21">
    <citation type="journal article" date="2013" name="J. Biol. Chem.">
        <title>Identification of Wilms' tumor 1-associating protein complex and its role in alternative splicing and the cell cycle.</title>
        <authorList>
            <person name="Horiuchi K."/>
            <person name="Kawamura T."/>
            <person name="Iwanari H."/>
            <person name="Ohashi R."/>
            <person name="Naito M."/>
            <person name="Kodama T."/>
            <person name="Hamakubo T."/>
        </authorList>
    </citation>
    <scope>IDENTIFICATION IN A MACOM-LIKE COMPLEX</scope>
    <scope>SUBCELLULAR LOCATION</scope>
</reference>
<reference key="22">
    <citation type="journal article" date="2013" name="J. Proteome Res.">
        <title>Toward a comprehensive characterization of a human cancer cell phosphoproteome.</title>
        <authorList>
            <person name="Zhou H."/>
            <person name="Di Palma S."/>
            <person name="Preisinger C."/>
            <person name="Peng M."/>
            <person name="Polat A.N."/>
            <person name="Heck A.J."/>
            <person name="Mohammed S."/>
        </authorList>
    </citation>
    <scope>PHOSPHORYLATION [LARGE SCALE ANALYSIS] AT SER-177; SER-196; SER-198; SER-222; SER-259; SER-262; SER-264; SER-268; SER-285; SER-290; SER-300; SER-315; THR-341; THR-355; TYR-383; SER-385; SER-397; THR-402; SER-422; SER-427; THR-431; SER-450; SER-472; SER-496; SER-512; SER-525; SER-531; SER-559; SER-564; SER-578; SER-658; SER-660; THR-661 AND SER-690</scope>
    <scope>IDENTIFICATION BY MASS SPECTROMETRY [LARGE SCALE ANALYSIS]</scope>
    <source>
        <tissue>Cervix carcinoma</tissue>
        <tissue>Erythroleukemia</tissue>
    </source>
</reference>
<reference key="23">
    <citation type="journal article" date="2014" name="J. Proteomics">
        <title>An enzyme assisted RP-RPLC approach for in-depth analysis of human liver phosphoproteome.</title>
        <authorList>
            <person name="Bian Y."/>
            <person name="Song C."/>
            <person name="Cheng K."/>
            <person name="Dong M."/>
            <person name="Wang F."/>
            <person name="Huang J."/>
            <person name="Sun D."/>
            <person name="Wang L."/>
            <person name="Ye M."/>
            <person name="Zou H."/>
        </authorList>
    </citation>
    <scope>PHOSPHORYLATION [LARGE SCALE ANALYSIS] AT SER-177; TYR-219; SER-222; SER-259; SER-264; SER-285; SER-290; SER-385; SER-389; SER-397; SER-648 AND SER-658</scope>
    <scope>PHOSPHORYLATION [LARGE SCALE ANALYSIS] AT SER-339 (ISOFORM 4)</scope>
    <scope>IDENTIFICATION BY MASS SPECTROMETRY [LARGE SCALE ANALYSIS]</scope>
    <source>
        <tissue>Liver</tissue>
    </source>
</reference>
<reference key="24">
    <citation type="journal article" date="2014" name="Mol. Cell. Proteomics">
        <title>Immunoaffinity enrichment and mass spectrometry analysis of protein methylation.</title>
        <authorList>
            <person name="Guo A."/>
            <person name="Gu H."/>
            <person name="Zhou J."/>
            <person name="Mulhern D."/>
            <person name="Wang Y."/>
            <person name="Lee K.A."/>
            <person name="Yang V."/>
            <person name="Aguiar M."/>
            <person name="Kornhauser J."/>
            <person name="Jia X."/>
            <person name="Ren J."/>
            <person name="Beausoleil S.A."/>
            <person name="Silva J.C."/>
            <person name="Vemulapalli V."/>
            <person name="Bedford M.T."/>
            <person name="Comb M.J."/>
        </authorList>
    </citation>
    <scope>METHYLATION [LARGE SCALE ANALYSIS] AT ARG-809</scope>
    <scope>IDENTIFICATION BY MASS SPECTROMETRY [LARGE SCALE ANALYSIS]</scope>
    <source>
        <tissue>Colon carcinoma</tissue>
    </source>
</reference>
<reference key="25">
    <citation type="journal article" date="2014" name="Nat. Struct. Mol. Biol.">
        <title>Uncovering global SUMOylation signaling networks in a site-specific manner.</title>
        <authorList>
            <person name="Hendriks I.A."/>
            <person name="D'Souza R.C."/>
            <person name="Yang B."/>
            <person name="Verlaan-de Vries M."/>
            <person name="Mann M."/>
            <person name="Vertegaal A.C."/>
        </authorList>
    </citation>
    <scope>SUMOYLATION [LARGE SCALE ANALYSIS] AT LYS-332; LYS-413; LYS-437; LYS-462; LYS-491; LYS-501; LYS-548; LYS-550; LYS-580; LYS-676; LYS-778 AND LYS-831</scope>
    <scope>IDENTIFICATION BY MASS SPECTROMETRY [LARGE SCALE ANALYSIS]</scope>
</reference>
<reference key="26">
    <citation type="journal article" date="2014" name="Proc. Natl. Acad. Sci. U.S.A.">
        <title>Mapping of SUMO sites and analysis of SUMOylation changes induced by external stimuli.</title>
        <authorList>
            <person name="Impens F."/>
            <person name="Radoshevich L."/>
            <person name="Cossart P."/>
            <person name="Ribet D."/>
        </authorList>
    </citation>
    <scope>SUMOYLATION [LARGE SCALE ANALYSIS] AT LYS-580 AND LYS-831</scope>
    <scope>IDENTIFICATION BY MASS SPECTROMETRY [LARGE SCALE ANALYSIS]</scope>
</reference>
<reference key="27">
    <citation type="journal article" date="2015" name="Cell Rep.">
        <title>SUMO-2 orchestrates chromatin modifiers in response to DNA damage.</title>
        <authorList>
            <person name="Hendriks I.A."/>
            <person name="Treffers L.W."/>
            <person name="Verlaan-de Vries M."/>
            <person name="Olsen J.V."/>
            <person name="Vertegaal A.C."/>
        </authorList>
    </citation>
    <scope>SUMOYLATION [LARGE SCALE ANALYSIS] AT LYS-491; LYS-580; LYS-676 AND LYS-831</scope>
    <scope>IDENTIFICATION BY MASS SPECTROMETRY [LARGE SCALE ANALYSIS]</scope>
</reference>
<reference key="28">
    <citation type="journal article" date="2015" name="Mol. Cell. Proteomics">
        <title>System-wide analysis of SUMOylation dynamics in response to replication stress reveals novel small ubiquitin-like modified target proteins and acceptor lysines relevant for genome stability.</title>
        <authorList>
            <person name="Xiao Z."/>
            <person name="Chang J.G."/>
            <person name="Hendriks I.A."/>
            <person name="Sigurdsson J.O."/>
            <person name="Olsen J.V."/>
            <person name="Vertegaal A.C."/>
        </authorList>
    </citation>
    <scope>SUMOYLATION [LARGE SCALE ANALYSIS] AT LYS-421; LYS-437; LYS-457; LYS-501; LYS-536; LYS-548; LYS-550; LYS-580 AND LYS-676</scope>
    <scope>IDENTIFICATION BY MASS SPECTROMETRY [LARGE SCALE ANALYSIS]</scope>
</reference>
<reference key="29">
    <citation type="journal article" date="2017" name="Nat. Struct. Mol. Biol.">
        <title>Site-specific mapping of the human SUMO proteome reveals co-modification with phosphorylation.</title>
        <authorList>
            <person name="Hendriks I.A."/>
            <person name="Lyon D."/>
            <person name="Young C."/>
            <person name="Jensen L.J."/>
            <person name="Vertegaal A.C."/>
            <person name="Nielsen M.L."/>
        </authorList>
    </citation>
    <scope>SUMOYLATION [LARGE SCALE ANALYSIS] AT LYS-188; LYS-332; LYS-413; LYS-421; LYS-437; LYS-457; LYS-462; LYS-491; LYS-492; LYS-501; LYS-536; LYS-548; LYS-550; LYS-567; LYS-580; LYS-593; LYS-599; LYS-622; LYS-676; LYS-778; LYS-784; LYS-831 AND LYS-911</scope>
    <scope>IDENTIFICATION BY MASS SPECTROMETRY [LARGE SCALE ANALYSIS]</scope>
</reference>
<gene>
    <name type="primary">BCLAF1</name>
    <name type="synonym">BTF</name>
    <name type="synonym">KIAA0164</name>
</gene>